<keyword id="KW-0167">Capsid protein</keyword>
<keyword id="KW-1176">Cytoplasmic inwards viral transport</keyword>
<keyword id="KW-1015">Disulfide bond</keyword>
<keyword id="KW-0238">DNA-binding</keyword>
<keyword id="KW-1039">Host endosome</keyword>
<keyword id="KW-1040">Host Golgi apparatus</keyword>
<keyword id="KW-1048">Host nucleus</keyword>
<keyword id="KW-0945">Host-virus interaction</keyword>
<keyword id="KW-0426">Late protein</keyword>
<keyword id="KW-1177">Microtubular inwards viral transport</keyword>
<keyword id="KW-0597">Phosphoprotein</keyword>
<keyword id="KW-1163">Viral penetration into host nucleus</keyword>
<keyword id="KW-0946">Virion</keyword>
<keyword id="KW-1160">Virus entry into host cell</keyword>
<name>VL2_HPV55</name>
<accession>Q80939</accession>
<proteinExistence type="inferred from homology"/>
<protein>
    <recommendedName>
        <fullName evidence="1">Minor capsid protein L2</fullName>
    </recommendedName>
</protein>
<organismHost>
    <name type="scientific">Homo sapiens</name>
    <name type="common">Human</name>
    <dbReference type="NCBI Taxonomy" id="9606"/>
</organismHost>
<reference key="1">
    <citation type="submission" date="1995-10" db="EMBL/GenBank/DDBJ databases">
        <authorList>
            <person name="Delius H."/>
        </authorList>
    </citation>
    <scope>NUCLEOTIDE SEQUENCE [GENOMIC DNA]</scope>
</reference>
<evidence type="ECO:0000255" key="1">
    <source>
        <dbReference type="HAMAP-Rule" id="MF_04003"/>
    </source>
</evidence>
<dbReference type="EMBL" id="U31791">
    <property type="protein sequence ID" value="AAA79483.1"/>
    <property type="molecule type" value="Genomic_DNA"/>
</dbReference>
<dbReference type="Proteomes" id="UP000152738">
    <property type="component" value="Genome"/>
</dbReference>
<dbReference type="GO" id="GO:0043657">
    <property type="term" value="C:host cell"/>
    <property type="evidence" value="ECO:0007669"/>
    <property type="project" value="GOC"/>
</dbReference>
<dbReference type="GO" id="GO:0044174">
    <property type="term" value="C:host cell endosome"/>
    <property type="evidence" value="ECO:0007669"/>
    <property type="project" value="UniProtKB-KW"/>
</dbReference>
<dbReference type="GO" id="GO:0044177">
    <property type="term" value="C:host cell Golgi apparatus"/>
    <property type="evidence" value="ECO:0007669"/>
    <property type="project" value="UniProtKB-SubCell"/>
</dbReference>
<dbReference type="GO" id="GO:0042025">
    <property type="term" value="C:host cell nucleus"/>
    <property type="evidence" value="ECO:0007669"/>
    <property type="project" value="UniProtKB-SubCell"/>
</dbReference>
<dbReference type="GO" id="GO:0019028">
    <property type="term" value="C:viral capsid"/>
    <property type="evidence" value="ECO:0007669"/>
    <property type="project" value="UniProtKB-UniRule"/>
</dbReference>
<dbReference type="GO" id="GO:0003677">
    <property type="term" value="F:DNA binding"/>
    <property type="evidence" value="ECO:0007669"/>
    <property type="project" value="UniProtKB-UniRule"/>
</dbReference>
<dbReference type="GO" id="GO:0005198">
    <property type="term" value="F:structural molecule activity"/>
    <property type="evidence" value="ECO:0007669"/>
    <property type="project" value="UniProtKB-UniRule"/>
</dbReference>
<dbReference type="GO" id="GO:0075521">
    <property type="term" value="P:microtubule-dependent intracellular transport of viral material towards nucleus"/>
    <property type="evidence" value="ECO:0007669"/>
    <property type="project" value="UniProtKB-UniRule"/>
</dbReference>
<dbReference type="GO" id="GO:0046718">
    <property type="term" value="P:symbiont entry into host cell"/>
    <property type="evidence" value="ECO:0007669"/>
    <property type="project" value="UniProtKB-KW"/>
</dbReference>
<dbReference type="GO" id="GO:0075732">
    <property type="term" value="P:viral penetration into host nucleus"/>
    <property type="evidence" value="ECO:0007669"/>
    <property type="project" value="UniProtKB-KW"/>
</dbReference>
<dbReference type="HAMAP" id="MF_04003">
    <property type="entry name" value="PPV_L2"/>
    <property type="match status" value="1"/>
</dbReference>
<dbReference type="InterPro" id="IPR000784">
    <property type="entry name" value="Late_L2"/>
</dbReference>
<dbReference type="Pfam" id="PF00513">
    <property type="entry name" value="Late_protein_L2"/>
    <property type="match status" value="1"/>
</dbReference>
<gene>
    <name evidence="1" type="primary">L2</name>
</gene>
<sequence>MAHSRARRRKRASATQLYQTCKAAGTCPSDIIPKVEHNTIADQILKWGSLGVFFGGLGIGTGSGTGGRTGYIPLQSTPRPEIPSGPTTRPPILVDTVAPGDPSIVSLVEESAIINSGAPELVPPSHGGFEITTSESTTPAILDVSVTTHTTSTSVFRNPSFADPSVVQSQPAVEAGGHILISTSTISSHPVEEIPLDTFIVSSSDSNPASSTPIPASGARPRIGLYSKALHQVQVTDPAFLSSPQRLITFDNPAYEGEDVSLEFAHNTIHQPPDDAFMDIIRLHRPAIQSRRGRVRFSRIGQRGSMYTRSGKHIGGRIHFYQDISPISAAAEEIELHPLVATAHDTSLFDIYAEPDPDFTEEPVPLSFSTSTPFQRSSVSATPWGNTTVPLSLPGDMFVQPGPDIIFPTASTTTPYSPVTPALPTGPVFISGATFYLYPAWYFARKRRKRVSLFFADVAA</sequence>
<feature type="chain" id="PRO_0000133621" description="Minor capsid protein L2">
    <location>
        <begin position="1"/>
        <end position="460"/>
    </location>
</feature>
<feature type="short sequence motif" description="Nuclear localization signal" evidence="1">
    <location>
        <begin position="1"/>
        <end position="12"/>
    </location>
</feature>
<feature type="short sequence motif" description="Nuclear localization signal" evidence="1">
    <location>
        <begin position="443"/>
        <end position="451"/>
    </location>
</feature>
<feature type="disulfide bond" evidence="1">
    <location>
        <begin position="21"/>
        <end position="27"/>
    </location>
</feature>
<organism>
    <name type="scientific">Human papillomavirus type 55</name>
    <dbReference type="NCBI Taxonomy" id="37114"/>
    <lineage>
        <taxon>Viruses</taxon>
        <taxon>Monodnaviria</taxon>
        <taxon>Shotokuvirae</taxon>
        <taxon>Cossaviricota</taxon>
        <taxon>Papovaviricetes</taxon>
        <taxon>Zurhausenvirales</taxon>
        <taxon>Papillomaviridae</taxon>
        <taxon>Firstpapillomavirinae</taxon>
        <taxon>Alphapapillomavirus</taxon>
        <taxon>Alphapapillomavirus 10</taxon>
    </lineage>
</organism>
<comment type="function">
    <text evidence="1">Minor protein of the capsid that localizes along the inner surface of the virion, within the central cavities beneath the L1 pentamers. Plays a role in capsid stabilization through interaction with the major capsid protein L1. Once the virion enters the host cell, L2 escorts the genomic DNA into the nucleus by promoting escape from the endosomal compartments and traffic through the host Golgi network. Mechanistically, the C-terminus of L2 possesses a cell-penetrating peptide that protudes from the host endosome, interacts with host cytoplasmic retromer cargo and thereby mediates the capsid delivery to the host trans-Golgi network. Plays a role through its interaction with host dynein in the intracellular microtubule-dependent transport of viral capsid toward the nucleus. Mediates the viral genome import into the nucleus through binding to host importins. Once within the nucleus, L2 localizes viral genomes to host PML bodies in order to activate early gene expression for establishment of infection. Later on, promotes late gene expression by interacting with the viral E2 protein and by inhibiting its transcriptional activation functions. During virion assembly, encapsidates the genome by direct interaction with the viral DNA.</text>
</comment>
<comment type="subunit">
    <text evidence="1">Interacts with major capsid protein L1. Interacts with E2; this interaction inhibits E2 transcriptional activity but not the DNA replication function E2. Interacts with host GADD45GIP1. Interacts with host HSPA8; this interaction is required for L2 nuclear translocation. Interacts with host importins KPNB2 and KPNB3. Forms a complex with importin alpha2-beta1 heterodimers via interaction with the importin alpha2 adapter. Interacts with host DYNLT1; this interaction is essential for virus intracellular transport during entry. Interacts (via C-terminus) with host retromer subunits VPS35 and VPS29.</text>
</comment>
<comment type="subcellular location">
    <subcellularLocation>
        <location evidence="1">Virion</location>
    </subcellularLocation>
    <subcellularLocation>
        <location evidence="1">Host nucleus</location>
    </subcellularLocation>
    <subcellularLocation>
        <location evidence="1">Host early endosome</location>
    </subcellularLocation>
    <subcellularLocation>
        <location evidence="1">Host Golgi apparatus</location>
    </subcellularLocation>
</comment>
<comment type="PTM">
    <text evidence="1">Highly phosphorylated.</text>
</comment>
<comment type="similarity">
    <text evidence="1">Belongs to the papillomaviridae L2 protein family.</text>
</comment>